<accession>Q8FQB2</accession>
<proteinExistence type="inferred from homology"/>
<comment type="function">
    <text evidence="1">Catalyzes the transfer of a methyl group from 5-methyltetrahydrofolate to homocysteine resulting in methionine formation.</text>
</comment>
<comment type="catalytic activity">
    <reaction evidence="1">
        <text>5-methyltetrahydropteroyltri-L-glutamate + L-homocysteine = tetrahydropteroyltri-L-glutamate + L-methionine</text>
        <dbReference type="Rhea" id="RHEA:21196"/>
        <dbReference type="ChEBI" id="CHEBI:57844"/>
        <dbReference type="ChEBI" id="CHEBI:58140"/>
        <dbReference type="ChEBI" id="CHEBI:58199"/>
        <dbReference type="ChEBI" id="CHEBI:58207"/>
        <dbReference type="EC" id="2.1.1.14"/>
    </reaction>
</comment>
<comment type="cofactor">
    <cofactor evidence="1">
        <name>Zn(2+)</name>
        <dbReference type="ChEBI" id="CHEBI:29105"/>
    </cofactor>
    <text evidence="1">Binds 1 zinc ion per subunit.</text>
</comment>
<comment type="pathway">
    <text evidence="1">Amino-acid biosynthesis; L-methionine biosynthesis via de novo pathway; L-methionine from L-homocysteine (MetE route): step 1/1.</text>
</comment>
<comment type="similarity">
    <text evidence="1">Belongs to the vitamin-B12 independent methionine synthase family.</text>
</comment>
<reference key="1">
    <citation type="journal article" date="2003" name="Genome Res.">
        <title>Comparative complete genome sequence analysis of the amino acid replacements responsible for the thermostability of Corynebacterium efficiens.</title>
        <authorList>
            <person name="Nishio Y."/>
            <person name="Nakamura Y."/>
            <person name="Kawarabayasi Y."/>
            <person name="Usuda Y."/>
            <person name="Kimura E."/>
            <person name="Sugimoto S."/>
            <person name="Matsui K."/>
            <person name="Yamagishi A."/>
            <person name="Kikuchi H."/>
            <person name="Ikeo K."/>
            <person name="Gojobori T."/>
        </authorList>
    </citation>
    <scope>NUCLEOTIDE SEQUENCE [LARGE SCALE GENOMIC DNA]</scope>
    <source>
        <strain>DSM 44549 / YS-314 / AJ 12310 / JCM 11189 / NBRC 100395</strain>
    </source>
</reference>
<dbReference type="EC" id="2.1.1.14" evidence="1"/>
<dbReference type="EMBL" id="BA000035">
    <property type="protein sequence ID" value="BAC18019.1"/>
    <property type="molecule type" value="Genomic_DNA"/>
</dbReference>
<dbReference type="RefSeq" id="WP_011075342.1">
    <property type="nucleotide sequence ID" value="NC_004369.1"/>
</dbReference>
<dbReference type="SMR" id="Q8FQB2"/>
<dbReference type="STRING" id="196164.gene:10741617"/>
<dbReference type="KEGG" id="cef:CE1209"/>
<dbReference type="eggNOG" id="COG0620">
    <property type="taxonomic scope" value="Bacteria"/>
</dbReference>
<dbReference type="HOGENOM" id="CLU_013175_0_0_11"/>
<dbReference type="UniPathway" id="UPA00051">
    <property type="reaction ID" value="UER00082"/>
</dbReference>
<dbReference type="Proteomes" id="UP000001409">
    <property type="component" value="Chromosome"/>
</dbReference>
<dbReference type="GO" id="GO:0003871">
    <property type="term" value="F:5-methyltetrahydropteroyltriglutamate-homocysteine S-methyltransferase activity"/>
    <property type="evidence" value="ECO:0007669"/>
    <property type="project" value="UniProtKB-UniRule"/>
</dbReference>
<dbReference type="GO" id="GO:0008270">
    <property type="term" value="F:zinc ion binding"/>
    <property type="evidence" value="ECO:0007669"/>
    <property type="project" value="InterPro"/>
</dbReference>
<dbReference type="GO" id="GO:0009086">
    <property type="term" value="P:methionine biosynthetic process"/>
    <property type="evidence" value="ECO:0007669"/>
    <property type="project" value="UniProtKB-UniRule"/>
</dbReference>
<dbReference type="GO" id="GO:0032259">
    <property type="term" value="P:methylation"/>
    <property type="evidence" value="ECO:0007669"/>
    <property type="project" value="UniProtKB-KW"/>
</dbReference>
<dbReference type="CDD" id="cd03311">
    <property type="entry name" value="CIMS_C_terminal_like"/>
    <property type="match status" value="1"/>
</dbReference>
<dbReference type="CDD" id="cd03312">
    <property type="entry name" value="CIMS_N_terminal_like"/>
    <property type="match status" value="1"/>
</dbReference>
<dbReference type="Gene3D" id="3.20.20.210">
    <property type="match status" value="2"/>
</dbReference>
<dbReference type="HAMAP" id="MF_00172">
    <property type="entry name" value="Meth_synth"/>
    <property type="match status" value="1"/>
</dbReference>
<dbReference type="InterPro" id="IPR013215">
    <property type="entry name" value="Cbl-indep_Met_Synth_N"/>
</dbReference>
<dbReference type="InterPro" id="IPR006276">
    <property type="entry name" value="Cobalamin-indep_Met_synthase"/>
</dbReference>
<dbReference type="InterPro" id="IPR002629">
    <property type="entry name" value="Met_Synth_C/arc"/>
</dbReference>
<dbReference type="InterPro" id="IPR038071">
    <property type="entry name" value="UROD/MetE-like_sf"/>
</dbReference>
<dbReference type="NCBIfam" id="TIGR01371">
    <property type="entry name" value="met_syn_B12ind"/>
    <property type="match status" value="1"/>
</dbReference>
<dbReference type="NCBIfam" id="NF003556">
    <property type="entry name" value="PRK05222.1"/>
    <property type="match status" value="1"/>
</dbReference>
<dbReference type="PANTHER" id="PTHR30519">
    <property type="entry name" value="5-METHYLTETRAHYDROPTEROYLTRIGLUTAMATE--HOMOCYSTEINE METHYLTRANSFERASE"/>
    <property type="match status" value="1"/>
</dbReference>
<dbReference type="Pfam" id="PF08267">
    <property type="entry name" value="Meth_synt_1"/>
    <property type="match status" value="1"/>
</dbReference>
<dbReference type="Pfam" id="PF01717">
    <property type="entry name" value="Meth_synt_2"/>
    <property type="match status" value="1"/>
</dbReference>
<dbReference type="PIRSF" id="PIRSF000382">
    <property type="entry name" value="MeTrfase_B12_ind"/>
    <property type="match status" value="1"/>
</dbReference>
<dbReference type="SUPFAM" id="SSF51726">
    <property type="entry name" value="UROD/MetE-like"/>
    <property type="match status" value="2"/>
</dbReference>
<organism>
    <name type="scientific">Corynebacterium efficiens (strain DSM 44549 / YS-314 / AJ 12310 / JCM 11189 / NBRC 100395)</name>
    <dbReference type="NCBI Taxonomy" id="196164"/>
    <lineage>
        <taxon>Bacteria</taxon>
        <taxon>Bacillati</taxon>
        <taxon>Actinomycetota</taxon>
        <taxon>Actinomycetes</taxon>
        <taxon>Mycobacteriales</taxon>
        <taxon>Corynebacteriaceae</taxon>
        <taxon>Corynebacterium</taxon>
    </lineage>
</organism>
<sequence>MTSFFSSTIAGVPRIGAHRELKFALEGFWSGTVSGRELGQTATTLTNDYCDQLAAAGLDSIPTAGRSYYDAMLDTTALLGVFPERFQNLDDHPNDGLPAHIDRYFATARGTAELPASAMTKWFDTNYHYLVPELSADTRFILDDTALLTDIHDQLTRGHDVRPVLIGPLTYLSLSRTTDGSDPLDHLETLFEVFERLLAKLPTPWVQLDEPSLVTDVAPEVLERVRAGYARLATRGGVFVNTYFGAGDQALDTLAGLGLGAIGVDLVSDGVTALEAWKGEELLVAGIVDGRNVWRTDLCAALGTLRRLQARGPVAVSTSCSLLHVPYALTAETGLNPEVREWLAFGEEKVREVVALADALAGEINESLFDAAAAALADRRHSVLTAARDADITDADRSRSPFEVRAAAQDEALDLPPLPTTTIGSFPQTREIRSARARYRAGHLTPEQYEDAMRAEIAQVIRAQEDLGLDVLVHGEPERNDMVQYFAELLDGFLTTTNGWVQSYGSRCVRPPILFGTVTRPEPMTVRWFAHAQSLTNRPVKGMLTGPVTILAWSFVRDDQPLAVTADQIALALREEITDLVDAGAKIIQVDEPAIRELLPLRRAEQDAYTRWAVGAFRLSTSTAPDHVQIHTHMCYSEFNELIRSIIDLDADVTTIEAARSDMQVLAALKSSGFHLGVGPGVWDIHSPRVPELAEVSQLLSSALESVDPRRLWVNPDCGLKTRGWEETTASLKVLVAAAEQARTDLLQRASTSA</sequence>
<gene>
    <name evidence="1" type="primary">metE</name>
    <name type="ordered locus">CE1209</name>
</gene>
<feature type="chain" id="PRO_0000098626" description="5-methyltetrahydropteroyltriglutamate--homocysteine methyltransferase">
    <location>
        <begin position="1"/>
        <end position="754"/>
    </location>
</feature>
<feature type="active site" description="Proton donor" evidence="1">
    <location>
        <position position="686"/>
    </location>
</feature>
<feature type="binding site" evidence="1">
    <location>
        <begin position="19"/>
        <end position="22"/>
    </location>
    <ligand>
        <name>5-methyltetrahydropteroyltri-L-glutamate</name>
        <dbReference type="ChEBI" id="CHEBI:58207"/>
    </ligand>
</feature>
<feature type="binding site" evidence="1">
    <location>
        <position position="121"/>
    </location>
    <ligand>
        <name>5-methyltetrahydropteroyltri-L-glutamate</name>
        <dbReference type="ChEBI" id="CHEBI:58207"/>
    </ligand>
</feature>
<feature type="binding site" evidence="1">
    <location>
        <begin position="423"/>
        <end position="425"/>
    </location>
    <ligand>
        <name>L-homocysteine</name>
        <dbReference type="ChEBI" id="CHEBI:58199"/>
    </ligand>
</feature>
<feature type="binding site" evidence="1">
    <location>
        <begin position="423"/>
        <end position="425"/>
    </location>
    <ligand>
        <name>L-methionine</name>
        <dbReference type="ChEBI" id="CHEBI:57844"/>
    </ligand>
</feature>
<feature type="binding site" evidence="1">
    <location>
        <position position="476"/>
    </location>
    <ligand>
        <name>L-homocysteine</name>
        <dbReference type="ChEBI" id="CHEBI:58199"/>
    </ligand>
</feature>
<feature type="binding site" evidence="1">
    <location>
        <position position="476"/>
    </location>
    <ligand>
        <name>L-methionine</name>
        <dbReference type="ChEBI" id="CHEBI:57844"/>
    </ligand>
</feature>
<feature type="binding site" evidence="1">
    <location>
        <begin position="507"/>
        <end position="508"/>
    </location>
    <ligand>
        <name>5-methyltetrahydropteroyltri-L-glutamate</name>
        <dbReference type="ChEBI" id="CHEBI:58207"/>
    </ligand>
</feature>
<feature type="binding site" evidence="1">
    <location>
        <position position="553"/>
    </location>
    <ligand>
        <name>5-methyltetrahydropteroyltri-L-glutamate</name>
        <dbReference type="ChEBI" id="CHEBI:58207"/>
    </ligand>
</feature>
<feature type="binding site" evidence="1">
    <location>
        <position position="591"/>
    </location>
    <ligand>
        <name>L-homocysteine</name>
        <dbReference type="ChEBI" id="CHEBI:58199"/>
    </ligand>
</feature>
<feature type="binding site" evidence="1">
    <location>
        <position position="591"/>
    </location>
    <ligand>
        <name>L-methionine</name>
        <dbReference type="ChEBI" id="CHEBI:57844"/>
    </ligand>
</feature>
<feature type="binding site" evidence="1">
    <location>
        <position position="597"/>
    </location>
    <ligand>
        <name>5-methyltetrahydropteroyltri-L-glutamate</name>
        <dbReference type="ChEBI" id="CHEBI:58207"/>
    </ligand>
</feature>
<feature type="binding site" evidence="1">
    <location>
        <position position="633"/>
    </location>
    <ligand>
        <name>Zn(2+)</name>
        <dbReference type="ChEBI" id="CHEBI:29105"/>
        <note>catalytic</note>
    </ligand>
</feature>
<feature type="binding site" evidence="1">
    <location>
        <position position="635"/>
    </location>
    <ligand>
        <name>Zn(2+)</name>
        <dbReference type="ChEBI" id="CHEBI:29105"/>
        <note>catalytic</note>
    </ligand>
</feature>
<feature type="binding site" evidence="1">
    <location>
        <position position="657"/>
    </location>
    <ligand>
        <name>Zn(2+)</name>
        <dbReference type="ChEBI" id="CHEBI:29105"/>
        <note>catalytic</note>
    </ligand>
</feature>
<feature type="binding site" evidence="1">
    <location>
        <position position="718"/>
    </location>
    <ligand>
        <name>Zn(2+)</name>
        <dbReference type="ChEBI" id="CHEBI:29105"/>
        <note>catalytic</note>
    </ligand>
</feature>
<evidence type="ECO:0000255" key="1">
    <source>
        <dbReference type="HAMAP-Rule" id="MF_00172"/>
    </source>
</evidence>
<name>METE_COREF</name>
<keyword id="KW-0028">Amino-acid biosynthesis</keyword>
<keyword id="KW-0479">Metal-binding</keyword>
<keyword id="KW-0486">Methionine biosynthesis</keyword>
<keyword id="KW-0489">Methyltransferase</keyword>
<keyword id="KW-1185">Reference proteome</keyword>
<keyword id="KW-0677">Repeat</keyword>
<keyword id="KW-0808">Transferase</keyword>
<keyword id="KW-0862">Zinc</keyword>
<protein>
    <recommendedName>
        <fullName evidence="1">5-methyltetrahydropteroyltriglutamate--homocysteine methyltransferase</fullName>
        <ecNumber evidence="1">2.1.1.14</ecNumber>
    </recommendedName>
    <alternativeName>
        <fullName evidence="1">Cobalamin-independent methionine synthase</fullName>
    </alternativeName>
    <alternativeName>
        <fullName evidence="1">Methionine synthase, vitamin-B12 independent isozyme</fullName>
    </alternativeName>
</protein>